<organism>
    <name type="scientific">Actinobacillus succinogenes (strain ATCC 55618 / DSM 22257 / CCUG 43843 / 130Z)</name>
    <dbReference type="NCBI Taxonomy" id="339671"/>
    <lineage>
        <taxon>Bacteria</taxon>
        <taxon>Pseudomonadati</taxon>
        <taxon>Pseudomonadota</taxon>
        <taxon>Gammaproteobacteria</taxon>
        <taxon>Pasteurellales</taxon>
        <taxon>Pasteurellaceae</taxon>
        <taxon>Actinobacillus</taxon>
    </lineage>
</organism>
<gene>
    <name evidence="1" type="primary">pyrG</name>
    <name type="ordered locus">Asuc_2052</name>
</gene>
<comment type="function">
    <text evidence="1">Catalyzes the ATP-dependent amination of UTP to CTP with either L-glutamine or ammonia as the source of nitrogen. Regulates intracellular CTP levels through interactions with the four ribonucleotide triphosphates.</text>
</comment>
<comment type="catalytic activity">
    <reaction evidence="1">
        <text>UTP + L-glutamine + ATP + H2O = CTP + L-glutamate + ADP + phosphate + 2 H(+)</text>
        <dbReference type="Rhea" id="RHEA:26426"/>
        <dbReference type="ChEBI" id="CHEBI:15377"/>
        <dbReference type="ChEBI" id="CHEBI:15378"/>
        <dbReference type="ChEBI" id="CHEBI:29985"/>
        <dbReference type="ChEBI" id="CHEBI:30616"/>
        <dbReference type="ChEBI" id="CHEBI:37563"/>
        <dbReference type="ChEBI" id="CHEBI:43474"/>
        <dbReference type="ChEBI" id="CHEBI:46398"/>
        <dbReference type="ChEBI" id="CHEBI:58359"/>
        <dbReference type="ChEBI" id="CHEBI:456216"/>
        <dbReference type="EC" id="6.3.4.2"/>
    </reaction>
</comment>
<comment type="catalytic activity">
    <reaction evidence="1">
        <text>L-glutamine + H2O = L-glutamate + NH4(+)</text>
        <dbReference type="Rhea" id="RHEA:15889"/>
        <dbReference type="ChEBI" id="CHEBI:15377"/>
        <dbReference type="ChEBI" id="CHEBI:28938"/>
        <dbReference type="ChEBI" id="CHEBI:29985"/>
        <dbReference type="ChEBI" id="CHEBI:58359"/>
    </reaction>
</comment>
<comment type="catalytic activity">
    <reaction evidence="1">
        <text>UTP + NH4(+) + ATP = CTP + ADP + phosphate + 2 H(+)</text>
        <dbReference type="Rhea" id="RHEA:16597"/>
        <dbReference type="ChEBI" id="CHEBI:15378"/>
        <dbReference type="ChEBI" id="CHEBI:28938"/>
        <dbReference type="ChEBI" id="CHEBI:30616"/>
        <dbReference type="ChEBI" id="CHEBI:37563"/>
        <dbReference type="ChEBI" id="CHEBI:43474"/>
        <dbReference type="ChEBI" id="CHEBI:46398"/>
        <dbReference type="ChEBI" id="CHEBI:456216"/>
    </reaction>
</comment>
<comment type="activity regulation">
    <text evidence="1">Allosterically activated by GTP, when glutamine is the substrate; GTP has no effect on the reaction when ammonia is the substrate. The allosteric effector GTP functions by stabilizing the protein conformation that binds the tetrahedral intermediate(s) formed during glutamine hydrolysis. Inhibited by the product CTP, via allosteric rather than competitive inhibition.</text>
</comment>
<comment type="pathway">
    <text evidence="1">Pyrimidine metabolism; CTP biosynthesis via de novo pathway; CTP from UDP: step 2/2.</text>
</comment>
<comment type="subunit">
    <text evidence="1">Homotetramer.</text>
</comment>
<comment type="miscellaneous">
    <text evidence="1">CTPSs have evolved a hybrid strategy for distinguishing between UTP and CTP. The overlapping regions of the product feedback inhibitory and substrate sites recognize a common feature in both compounds, the triphosphate moiety. To differentiate isosteric substrate and product pyrimidine rings, an additional pocket far from the expected kinase/ligase catalytic site, specifically recognizes the cytosine and ribose portions of the product inhibitor.</text>
</comment>
<comment type="similarity">
    <text evidence="1">Belongs to the CTP synthase family.</text>
</comment>
<sequence>MATNYIFVTGGVVSSLGKGIAAASLAALLEARGLNVTIMKLDPYINVDPGTMSPTQHGEVFVTQDGAETDLDLGHYERFIRTKMTKRNNFTTGKIYSEVLRKERRGDYLGATIQVIPHITNEIKARVIDGAAGYDVAIIEVGGTVGDIESLPFLEALRQLAVQVGRERTIFMHLTLVPYIPTAGEVKTKPTQHSVKELLSIGIQPDVLICRSDRMIPANERSKIALFCNVPEKAVISLKDVESIYQIPALLQSQGLDEFVCNRFHLEGKPADLSEWEQVLYRQANPTGEVTIGMVGKYVELPDAYKSVNEALKHAGLTNRLTVHIKYIDSQDVETKGTDVLKDLDGILVPGGFGYRGVEGKILTAQYARENNIPYLGICLGMQTALIEYARNVAGMKDANSSEFVKDCAYPVIGLITEWQDAEGNVEQRSENSDLGGTMRLGAQQCHLIEGSKARELYGKETIEERHRHRYEVNNTLLPQIEAAGLKVTGLSADRKLVEIIEVPNHPWFVACQFHPEFTSTPRDGHPLFAGFVKAAKENQKK</sequence>
<name>PYRG_ACTSZ</name>
<reference key="1">
    <citation type="journal article" date="2010" name="BMC Genomics">
        <title>A genomic perspective on the potential of Actinobacillus succinogenes for industrial succinate production.</title>
        <authorList>
            <person name="McKinlay J.B."/>
            <person name="Laivenieks M."/>
            <person name="Schindler B.D."/>
            <person name="McKinlay A.A."/>
            <person name="Siddaramappa S."/>
            <person name="Challacombe J.F."/>
            <person name="Lowry S.R."/>
            <person name="Clum A."/>
            <person name="Lapidus A.L."/>
            <person name="Burkhart K.B."/>
            <person name="Harkins V."/>
            <person name="Vieille C."/>
        </authorList>
    </citation>
    <scope>NUCLEOTIDE SEQUENCE [LARGE SCALE GENOMIC DNA]</scope>
    <source>
        <strain>ATCC 55618 / DSM 22257 / CCUG 43843 / 130Z</strain>
    </source>
</reference>
<dbReference type="EC" id="6.3.4.2" evidence="1"/>
<dbReference type="EMBL" id="CP000746">
    <property type="protein sequence ID" value="ABR75398.1"/>
    <property type="molecule type" value="Genomic_DNA"/>
</dbReference>
<dbReference type="RefSeq" id="WP_012073774.1">
    <property type="nucleotide sequence ID" value="NC_009655.1"/>
</dbReference>
<dbReference type="SMR" id="A6VR01"/>
<dbReference type="STRING" id="339671.Asuc_2052"/>
<dbReference type="MEROPS" id="C26.964"/>
<dbReference type="KEGG" id="asu:Asuc_2052"/>
<dbReference type="eggNOG" id="COG0504">
    <property type="taxonomic scope" value="Bacteria"/>
</dbReference>
<dbReference type="HOGENOM" id="CLU_011675_5_0_6"/>
<dbReference type="OrthoDB" id="9801107at2"/>
<dbReference type="UniPathway" id="UPA00159">
    <property type="reaction ID" value="UER00277"/>
</dbReference>
<dbReference type="Proteomes" id="UP000001114">
    <property type="component" value="Chromosome"/>
</dbReference>
<dbReference type="GO" id="GO:0005829">
    <property type="term" value="C:cytosol"/>
    <property type="evidence" value="ECO:0007669"/>
    <property type="project" value="TreeGrafter"/>
</dbReference>
<dbReference type="GO" id="GO:0005524">
    <property type="term" value="F:ATP binding"/>
    <property type="evidence" value="ECO:0007669"/>
    <property type="project" value="UniProtKB-KW"/>
</dbReference>
<dbReference type="GO" id="GO:0003883">
    <property type="term" value="F:CTP synthase activity"/>
    <property type="evidence" value="ECO:0007669"/>
    <property type="project" value="UniProtKB-UniRule"/>
</dbReference>
<dbReference type="GO" id="GO:0004359">
    <property type="term" value="F:glutaminase activity"/>
    <property type="evidence" value="ECO:0007669"/>
    <property type="project" value="RHEA"/>
</dbReference>
<dbReference type="GO" id="GO:0042802">
    <property type="term" value="F:identical protein binding"/>
    <property type="evidence" value="ECO:0007669"/>
    <property type="project" value="TreeGrafter"/>
</dbReference>
<dbReference type="GO" id="GO:0046872">
    <property type="term" value="F:metal ion binding"/>
    <property type="evidence" value="ECO:0007669"/>
    <property type="project" value="UniProtKB-KW"/>
</dbReference>
<dbReference type="GO" id="GO:0044210">
    <property type="term" value="P:'de novo' CTP biosynthetic process"/>
    <property type="evidence" value="ECO:0007669"/>
    <property type="project" value="UniProtKB-UniRule"/>
</dbReference>
<dbReference type="GO" id="GO:0019856">
    <property type="term" value="P:pyrimidine nucleobase biosynthetic process"/>
    <property type="evidence" value="ECO:0007669"/>
    <property type="project" value="TreeGrafter"/>
</dbReference>
<dbReference type="CDD" id="cd03113">
    <property type="entry name" value="CTPS_N"/>
    <property type="match status" value="1"/>
</dbReference>
<dbReference type="CDD" id="cd01746">
    <property type="entry name" value="GATase1_CTP_Synthase"/>
    <property type="match status" value="1"/>
</dbReference>
<dbReference type="FunFam" id="3.40.50.300:FF:000009">
    <property type="entry name" value="CTP synthase"/>
    <property type="match status" value="1"/>
</dbReference>
<dbReference type="FunFam" id="3.40.50.880:FF:000002">
    <property type="entry name" value="CTP synthase"/>
    <property type="match status" value="1"/>
</dbReference>
<dbReference type="Gene3D" id="3.40.50.880">
    <property type="match status" value="1"/>
</dbReference>
<dbReference type="Gene3D" id="3.40.50.300">
    <property type="entry name" value="P-loop containing nucleotide triphosphate hydrolases"/>
    <property type="match status" value="1"/>
</dbReference>
<dbReference type="HAMAP" id="MF_01227">
    <property type="entry name" value="PyrG"/>
    <property type="match status" value="1"/>
</dbReference>
<dbReference type="InterPro" id="IPR029062">
    <property type="entry name" value="Class_I_gatase-like"/>
</dbReference>
<dbReference type="InterPro" id="IPR004468">
    <property type="entry name" value="CTP_synthase"/>
</dbReference>
<dbReference type="InterPro" id="IPR017456">
    <property type="entry name" value="CTP_synthase_N"/>
</dbReference>
<dbReference type="InterPro" id="IPR017926">
    <property type="entry name" value="GATASE"/>
</dbReference>
<dbReference type="InterPro" id="IPR033828">
    <property type="entry name" value="GATase1_CTP_Synthase"/>
</dbReference>
<dbReference type="InterPro" id="IPR027417">
    <property type="entry name" value="P-loop_NTPase"/>
</dbReference>
<dbReference type="NCBIfam" id="NF003792">
    <property type="entry name" value="PRK05380.1"/>
    <property type="match status" value="1"/>
</dbReference>
<dbReference type="NCBIfam" id="TIGR00337">
    <property type="entry name" value="PyrG"/>
    <property type="match status" value="1"/>
</dbReference>
<dbReference type="PANTHER" id="PTHR11550">
    <property type="entry name" value="CTP SYNTHASE"/>
    <property type="match status" value="1"/>
</dbReference>
<dbReference type="PANTHER" id="PTHR11550:SF0">
    <property type="entry name" value="CTP SYNTHASE-RELATED"/>
    <property type="match status" value="1"/>
</dbReference>
<dbReference type="Pfam" id="PF06418">
    <property type="entry name" value="CTP_synth_N"/>
    <property type="match status" value="1"/>
</dbReference>
<dbReference type="Pfam" id="PF00117">
    <property type="entry name" value="GATase"/>
    <property type="match status" value="1"/>
</dbReference>
<dbReference type="SUPFAM" id="SSF52317">
    <property type="entry name" value="Class I glutamine amidotransferase-like"/>
    <property type="match status" value="1"/>
</dbReference>
<dbReference type="SUPFAM" id="SSF52540">
    <property type="entry name" value="P-loop containing nucleoside triphosphate hydrolases"/>
    <property type="match status" value="1"/>
</dbReference>
<dbReference type="PROSITE" id="PS51273">
    <property type="entry name" value="GATASE_TYPE_1"/>
    <property type="match status" value="1"/>
</dbReference>
<accession>A6VR01</accession>
<proteinExistence type="inferred from homology"/>
<feature type="chain" id="PRO_1000139369" description="CTP synthase">
    <location>
        <begin position="1"/>
        <end position="542"/>
    </location>
</feature>
<feature type="domain" description="Glutamine amidotransferase type-1" evidence="1">
    <location>
        <begin position="291"/>
        <end position="542"/>
    </location>
</feature>
<feature type="region of interest" description="Amidoligase domain" evidence="1">
    <location>
        <begin position="1"/>
        <end position="266"/>
    </location>
</feature>
<feature type="active site" description="Nucleophile; for glutamine hydrolysis" evidence="1">
    <location>
        <position position="379"/>
    </location>
</feature>
<feature type="active site" evidence="1">
    <location>
        <position position="515"/>
    </location>
</feature>
<feature type="active site" evidence="1">
    <location>
        <position position="517"/>
    </location>
</feature>
<feature type="binding site" evidence="1">
    <location>
        <position position="14"/>
    </location>
    <ligand>
        <name>CTP</name>
        <dbReference type="ChEBI" id="CHEBI:37563"/>
        <note>allosteric inhibitor</note>
    </ligand>
</feature>
<feature type="binding site" evidence="1">
    <location>
        <position position="14"/>
    </location>
    <ligand>
        <name>UTP</name>
        <dbReference type="ChEBI" id="CHEBI:46398"/>
    </ligand>
</feature>
<feature type="binding site" evidence="1">
    <location>
        <begin position="15"/>
        <end position="20"/>
    </location>
    <ligand>
        <name>ATP</name>
        <dbReference type="ChEBI" id="CHEBI:30616"/>
    </ligand>
</feature>
<feature type="binding site" evidence="1">
    <location>
        <position position="72"/>
    </location>
    <ligand>
        <name>ATP</name>
        <dbReference type="ChEBI" id="CHEBI:30616"/>
    </ligand>
</feature>
<feature type="binding site" evidence="1">
    <location>
        <position position="72"/>
    </location>
    <ligand>
        <name>Mg(2+)</name>
        <dbReference type="ChEBI" id="CHEBI:18420"/>
    </ligand>
</feature>
<feature type="binding site" evidence="1">
    <location>
        <position position="140"/>
    </location>
    <ligand>
        <name>Mg(2+)</name>
        <dbReference type="ChEBI" id="CHEBI:18420"/>
    </ligand>
</feature>
<feature type="binding site" evidence="1">
    <location>
        <begin position="147"/>
        <end position="149"/>
    </location>
    <ligand>
        <name>CTP</name>
        <dbReference type="ChEBI" id="CHEBI:37563"/>
        <note>allosteric inhibitor</note>
    </ligand>
</feature>
<feature type="binding site" evidence="1">
    <location>
        <begin position="187"/>
        <end position="192"/>
    </location>
    <ligand>
        <name>CTP</name>
        <dbReference type="ChEBI" id="CHEBI:37563"/>
        <note>allosteric inhibitor</note>
    </ligand>
</feature>
<feature type="binding site" evidence="1">
    <location>
        <begin position="187"/>
        <end position="192"/>
    </location>
    <ligand>
        <name>UTP</name>
        <dbReference type="ChEBI" id="CHEBI:46398"/>
    </ligand>
</feature>
<feature type="binding site" evidence="1">
    <location>
        <position position="223"/>
    </location>
    <ligand>
        <name>CTP</name>
        <dbReference type="ChEBI" id="CHEBI:37563"/>
        <note>allosteric inhibitor</note>
    </ligand>
</feature>
<feature type="binding site" evidence="1">
    <location>
        <position position="223"/>
    </location>
    <ligand>
        <name>UTP</name>
        <dbReference type="ChEBI" id="CHEBI:46398"/>
    </ligand>
</feature>
<feature type="binding site" evidence="1">
    <location>
        <begin position="239"/>
        <end position="241"/>
    </location>
    <ligand>
        <name>ATP</name>
        <dbReference type="ChEBI" id="CHEBI:30616"/>
    </ligand>
</feature>
<feature type="binding site" evidence="1">
    <location>
        <position position="352"/>
    </location>
    <ligand>
        <name>L-glutamine</name>
        <dbReference type="ChEBI" id="CHEBI:58359"/>
    </ligand>
</feature>
<feature type="binding site" evidence="1">
    <location>
        <begin position="380"/>
        <end position="383"/>
    </location>
    <ligand>
        <name>L-glutamine</name>
        <dbReference type="ChEBI" id="CHEBI:58359"/>
    </ligand>
</feature>
<feature type="binding site" evidence="1">
    <location>
        <position position="403"/>
    </location>
    <ligand>
        <name>L-glutamine</name>
        <dbReference type="ChEBI" id="CHEBI:58359"/>
    </ligand>
</feature>
<feature type="binding site" evidence="1">
    <location>
        <position position="470"/>
    </location>
    <ligand>
        <name>L-glutamine</name>
        <dbReference type="ChEBI" id="CHEBI:58359"/>
    </ligand>
</feature>
<keyword id="KW-0067">ATP-binding</keyword>
<keyword id="KW-0315">Glutamine amidotransferase</keyword>
<keyword id="KW-0436">Ligase</keyword>
<keyword id="KW-0460">Magnesium</keyword>
<keyword id="KW-0479">Metal-binding</keyword>
<keyword id="KW-0547">Nucleotide-binding</keyword>
<keyword id="KW-0665">Pyrimidine biosynthesis</keyword>
<keyword id="KW-1185">Reference proteome</keyword>
<protein>
    <recommendedName>
        <fullName evidence="1">CTP synthase</fullName>
        <ecNumber evidence="1">6.3.4.2</ecNumber>
    </recommendedName>
    <alternativeName>
        <fullName evidence="1">Cytidine 5'-triphosphate synthase</fullName>
    </alternativeName>
    <alternativeName>
        <fullName evidence="1">Cytidine triphosphate synthetase</fullName>
        <shortName evidence="1">CTP synthetase</shortName>
        <shortName evidence="1">CTPS</shortName>
    </alternativeName>
    <alternativeName>
        <fullName evidence="1">UTP--ammonia ligase</fullName>
    </alternativeName>
</protein>
<evidence type="ECO:0000255" key="1">
    <source>
        <dbReference type="HAMAP-Rule" id="MF_01227"/>
    </source>
</evidence>